<evidence type="ECO:0000256" key="1">
    <source>
        <dbReference type="SAM" id="MobiDB-lite"/>
    </source>
</evidence>
<evidence type="ECO:0000269" key="2">
    <source>
    </source>
</evidence>
<evidence type="ECO:0000269" key="3">
    <source>
    </source>
</evidence>
<proteinExistence type="predicted"/>
<feature type="chain" id="PRO_0000303995" description="Calnexin-independence factor 1">
    <location>
        <begin position="1"/>
        <end position="320"/>
    </location>
</feature>
<feature type="region of interest" description="Disordered" evidence="1">
    <location>
        <begin position="16"/>
        <end position="36"/>
    </location>
</feature>
<protein>
    <recommendedName>
        <fullName>Calnexin-independence factor 1</fullName>
    </recommendedName>
</protein>
<organism>
    <name type="scientific">Schizosaccharomyces pombe (strain 972 / ATCC 24843)</name>
    <name type="common">Fission yeast</name>
    <dbReference type="NCBI Taxonomy" id="284812"/>
    <lineage>
        <taxon>Eukaryota</taxon>
        <taxon>Fungi</taxon>
        <taxon>Dikarya</taxon>
        <taxon>Ascomycota</taxon>
        <taxon>Taphrinomycotina</taxon>
        <taxon>Schizosaccharomycetes</taxon>
        <taxon>Schizosaccharomycetales</taxon>
        <taxon>Schizosaccharomycetaceae</taxon>
        <taxon>Schizosaccharomyces</taxon>
    </lineage>
</organism>
<comment type="function">
    <text evidence="3">Induces a stably inheritable state of calnexin independence called the Cin state when overexpressed.</text>
</comment>
<comment type="subcellular location">
    <subcellularLocation>
        <location evidence="2 3">Nucleus</location>
        <location evidence="2 3">Nucleolus</location>
    </subcellularLocation>
</comment>
<keyword id="KW-0539">Nucleus</keyword>
<keyword id="KW-1185">Reference proteome</keyword>
<reference key="1">
    <citation type="journal article" date="2002" name="Nature">
        <title>The genome sequence of Schizosaccharomyces pombe.</title>
        <authorList>
            <person name="Wood V."/>
            <person name="Gwilliam R."/>
            <person name="Rajandream M.A."/>
            <person name="Lyne M.H."/>
            <person name="Lyne R."/>
            <person name="Stewart A."/>
            <person name="Sgouros J.G."/>
            <person name="Peat N."/>
            <person name="Hayles J."/>
            <person name="Baker S.G."/>
            <person name="Basham D."/>
            <person name="Bowman S."/>
            <person name="Brooks K."/>
            <person name="Brown D."/>
            <person name="Brown S."/>
            <person name="Chillingworth T."/>
            <person name="Churcher C.M."/>
            <person name="Collins M."/>
            <person name="Connor R."/>
            <person name="Cronin A."/>
            <person name="Davis P."/>
            <person name="Feltwell T."/>
            <person name="Fraser A."/>
            <person name="Gentles S."/>
            <person name="Goble A."/>
            <person name="Hamlin N."/>
            <person name="Harris D.E."/>
            <person name="Hidalgo J."/>
            <person name="Hodgson G."/>
            <person name="Holroyd S."/>
            <person name="Hornsby T."/>
            <person name="Howarth S."/>
            <person name="Huckle E.J."/>
            <person name="Hunt S."/>
            <person name="Jagels K."/>
            <person name="James K.D."/>
            <person name="Jones L."/>
            <person name="Jones M."/>
            <person name="Leather S."/>
            <person name="McDonald S."/>
            <person name="McLean J."/>
            <person name="Mooney P."/>
            <person name="Moule S."/>
            <person name="Mungall K.L."/>
            <person name="Murphy L.D."/>
            <person name="Niblett D."/>
            <person name="Odell C."/>
            <person name="Oliver K."/>
            <person name="O'Neil S."/>
            <person name="Pearson D."/>
            <person name="Quail M.A."/>
            <person name="Rabbinowitsch E."/>
            <person name="Rutherford K.M."/>
            <person name="Rutter S."/>
            <person name="Saunders D."/>
            <person name="Seeger K."/>
            <person name="Sharp S."/>
            <person name="Skelton J."/>
            <person name="Simmonds M.N."/>
            <person name="Squares R."/>
            <person name="Squares S."/>
            <person name="Stevens K."/>
            <person name="Taylor K."/>
            <person name="Taylor R.G."/>
            <person name="Tivey A."/>
            <person name="Walsh S.V."/>
            <person name="Warren T."/>
            <person name="Whitehead S."/>
            <person name="Woodward J.R."/>
            <person name="Volckaert G."/>
            <person name="Aert R."/>
            <person name="Robben J."/>
            <person name="Grymonprez B."/>
            <person name="Weltjens I."/>
            <person name="Vanstreels E."/>
            <person name="Rieger M."/>
            <person name="Schaefer M."/>
            <person name="Mueller-Auer S."/>
            <person name="Gabel C."/>
            <person name="Fuchs M."/>
            <person name="Duesterhoeft A."/>
            <person name="Fritzc C."/>
            <person name="Holzer E."/>
            <person name="Moestl D."/>
            <person name="Hilbert H."/>
            <person name="Borzym K."/>
            <person name="Langer I."/>
            <person name="Beck A."/>
            <person name="Lehrach H."/>
            <person name="Reinhardt R."/>
            <person name="Pohl T.M."/>
            <person name="Eger P."/>
            <person name="Zimmermann W."/>
            <person name="Wedler H."/>
            <person name="Wambutt R."/>
            <person name="Purnelle B."/>
            <person name="Goffeau A."/>
            <person name="Cadieu E."/>
            <person name="Dreano S."/>
            <person name="Gloux S."/>
            <person name="Lelaure V."/>
            <person name="Mottier S."/>
            <person name="Galibert F."/>
            <person name="Aves S.J."/>
            <person name="Xiang Z."/>
            <person name="Hunt C."/>
            <person name="Moore K."/>
            <person name="Hurst S.M."/>
            <person name="Lucas M."/>
            <person name="Rochet M."/>
            <person name="Gaillardin C."/>
            <person name="Tallada V.A."/>
            <person name="Garzon A."/>
            <person name="Thode G."/>
            <person name="Daga R.R."/>
            <person name="Cruzado L."/>
            <person name="Jimenez J."/>
            <person name="Sanchez M."/>
            <person name="del Rey F."/>
            <person name="Benito J."/>
            <person name="Dominguez A."/>
            <person name="Revuelta J.L."/>
            <person name="Moreno S."/>
            <person name="Armstrong J."/>
            <person name="Forsburg S.L."/>
            <person name="Cerutti L."/>
            <person name="Lowe T."/>
            <person name="McCombie W.R."/>
            <person name="Paulsen I."/>
            <person name="Potashkin J."/>
            <person name="Shpakovski G.V."/>
            <person name="Ussery D."/>
            <person name="Barrell B.G."/>
            <person name="Nurse P."/>
        </authorList>
    </citation>
    <scope>NUCLEOTIDE SEQUENCE [LARGE SCALE GENOMIC DNA]</scope>
    <source>
        <strain>972 / ATCC 24843</strain>
    </source>
</reference>
<reference key="2">
    <citation type="journal article" date="2006" name="Nat. Biotechnol.">
        <title>ORFeome cloning and global analysis of protein localization in the fission yeast Schizosaccharomyces pombe.</title>
        <authorList>
            <person name="Matsuyama A."/>
            <person name="Arai R."/>
            <person name="Yashiroda Y."/>
            <person name="Shirai A."/>
            <person name="Kamata A."/>
            <person name="Sekido S."/>
            <person name="Kobayashi Y."/>
            <person name="Hashimoto A."/>
            <person name="Hamamoto M."/>
            <person name="Hiraoka Y."/>
            <person name="Horinouchi S."/>
            <person name="Yoshida M."/>
        </authorList>
    </citation>
    <scope>SUBCELLULAR LOCATION [LARGE SCALE ANALYSIS]</scope>
</reference>
<reference key="3">
    <citation type="journal article" date="2009" name="J. Cell Sci.">
        <title>A nucleolar protein allows viability in the absence of the essential ER-residing molecular chaperone calnexin.</title>
        <authorList>
            <person name="Beauregard P.B."/>
            <person name="Guerin R."/>
            <person name="Turcotte C."/>
            <person name="Lindquist S."/>
            <person name="Rokeach L.A."/>
        </authorList>
    </citation>
    <scope>FUNCTION</scope>
    <scope>SUBCELLULAR LOCATION</scope>
</reference>
<sequence length="320" mass="36018">MSEEIITESIVKNFGSAETSVGEKQPKRKRSEVRAEKLKARKLQKAAEIVQKQKENRKILKDVSLKRLSKSLDRSLPSENTIDQISFNHAMSEEDASGYQIGDKHKNLLLYKLSSSSGSVFTENLYSTIQEFLSAQKVDIADSKNTYVFGSTFDKKSHALVKTSDSVRSLKYGSFVKACAPLFRFASGIIKAHAPHFHQALLKLELAPSALRFGVFPNFSLQSVSNGYMSMESNFSSIKYGFVVIIIVGELNDVELKIPAISHSLKLKDGSILVLRSSLLHQWYSLPKQSILYEIRLFAMSSLWHYEKNKSIKIAKKDDI</sequence>
<accession>O59792</accession>
<name>CIF1_SCHPO</name>
<dbReference type="EMBL" id="CU329672">
    <property type="protein sequence ID" value="CAA18283.1"/>
    <property type="molecule type" value="Genomic_DNA"/>
</dbReference>
<dbReference type="PIR" id="T41335">
    <property type="entry name" value="T41335"/>
</dbReference>
<dbReference type="RefSeq" id="NP_587843.1">
    <property type="nucleotide sequence ID" value="NM_001022836.2"/>
</dbReference>
<dbReference type="SMR" id="O59792"/>
<dbReference type="BioGRID" id="276097">
    <property type="interactions" value="4"/>
</dbReference>
<dbReference type="STRING" id="284812.O59792"/>
<dbReference type="iPTMnet" id="O59792"/>
<dbReference type="PaxDb" id="4896-SPCC364.01.1"/>
<dbReference type="EnsemblFungi" id="SPCC364.01.1">
    <property type="protein sequence ID" value="SPCC364.01.1:pep"/>
    <property type="gene ID" value="SPCC364.01"/>
</dbReference>
<dbReference type="GeneID" id="2539535"/>
<dbReference type="KEGG" id="spo:2539535"/>
<dbReference type="PomBase" id="SPCC364.01">
    <property type="gene designation" value="cif1"/>
</dbReference>
<dbReference type="VEuPathDB" id="FungiDB:SPCC364.01"/>
<dbReference type="HOGENOM" id="CLU_874817_0_0_1"/>
<dbReference type="InParanoid" id="O59792"/>
<dbReference type="OMA" id="HSVRLHD"/>
<dbReference type="PRO" id="PR:O59792"/>
<dbReference type="Proteomes" id="UP000002485">
    <property type="component" value="Chromosome III"/>
</dbReference>
<dbReference type="GO" id="GO:0005730">
    <property type="term" value="C:nucleolus"/>
    <property type="evidence" value="ECO:0000314"/>
    <property type="project" value="PomBase"/>
</dbReference>
<dbReference type="GO" id="GO:0006984">
    <property type="term" value="P:ER-nucleus signaling pathway"/>
    <property type="evidence" value="ECO:0000316"/>
    <property type="project" value="PomBase"/>
</dbReference>
<dbReference type="Gene3D" id="3.60.130.30">
    <property type="match status" value="1"/>
</dbReference>
<gene>
    <name type="primary">cif1</name>
    <name type="ORF">SPCC364.01</name>
</gene>